<reference evidence="9" key="1">
    <citation type="submission" date="2004-07" db="EMBL/GenBank/DDBJ databases">
        <authorList>
            <consortium name="NIH - Xenopus Gene Collection (XGC) project"/>
        </authorList>
    </citation>
    <scope>NUCLEOTIDE SEQUENCE [LARGE SCALE MRNA]</scope>
    <source>
        <tissue evidence="9">Spleen</tissue>
    </source>
</reference>
<reference evidence="10" key="2">
    <citation type="submission" date="2004-10" db="EMBL/GenBank/DDBJ databases">
        <title>Expression analysis of Xenopus hsp90 genes.</title>
        <authorList>
            <person name="Taherian A."/>
            <person name="Ovsenek N."/>
            <person name="Krone P.H."/>
        </authorList>
    </citation>
    <scope>NUCLEOTIDE SEQUENCE</scope>
</reference>
<reference evidence="12" key="3">
    <citation type="journal article" date="2016" name="Nature">
        <title>Genome evolution in the allotetraploid frog Xenopus laevis.</title>
        <authorList>
            <person name="Session A.M."/>
            <person name="Uno Y."/>
            <person name="Kwon T."/>
            <person name="Chapman J.A."/>
            <person name="Toyoda A."/>
            <person name="Takahashi S."/>
            <person name="Fukui A."/>
            <person name="Hikosaka A."/>
            <person name="Suzuki A."/>
            <person name="Kondo M."/>
            <person name="van Heeringen S.J."/>
            <person name="Quigley I."/>
            <person name="Heinz S."/>
            <person name="Ogino H."/>
            <person name="Ochi H."/>
            <person name="Hellsten U."/>
            <person name="Lyons J.B."/>
            <person name="Simakov O."/>
            <person name="Putnam N."/>
            <person name="Stites J."/>
            <person name="Kuroki Y."/>
            <person name="Tanaka T."/>
            <person name="Michiue T."/>
            <person name="Watanabe M."/>
            <person name="Bogdanovic O."/>
            <person name="Lister R."/>
            <person name="Georgiou G."/>
            <person name="Paranjpe S.S."/>
            <person name="van Kruijsbergen I."/>
            <person name="Shu S."/>
            <person name="Carlson J."/>
            <person name="Kinoshita T."/>
            <person name="Ohta Y."/>
            <person name="Mawaribuchi S."/>
            <person name="Jenkins J."/>
            <person name="Grimwood J."/>
            <person name="Schmutz J."/>
            <person name="Mitros T."/>
            <person name="Mozaffari S.V."/>
            <person name="Suzuki Y."/>
            <person name="Haramoto Y."/>
            <person name="Yamamoto T.S."/>
            <person name="Takagi C."/>
            <person name="Heald R."/>
            <person name="Miller K."/>
            <person name="Haudenschild C."/>
            <person name="Kitzman J."/>
            <person name="Nakayama T."/>
            <person name="Izutsu Y."/>
            <person name="Robert J."/>
            <person name="Fortriede J."/>
            <person name="Burns K."/>
            <person name="Lotay V."/>
            <person name="Karimi K."/>
            <person name="Yasuoka Y."/>
            <person name="Dichmann D.S."/>
            <person name="Flajnik M.F."/>
            <person name="Houston D.W."/>
            <person name="Shendure J."/>
            <person name="DuPasquier L."/>
            <person name="Vize P.D."/>
            <person name="Zorn A.M."/>
            <person name="Ito M."/>
            <person name="Marcotte E.M."/>
            <person name="Wallingford J.B."/>
            <person name="Ito Y."/>
            <person name="Asashima M."/>
            <person name="Ueno N."/>
            <person name="Matsuda Y."/>
            <person name="Veenstra G.J."/>
            <person name="Fujiyama A."/>
            <person name="Harland R.M."/>
            <person name="Taira M."/>
            <person name="Rokhsar D.S."/>
        </authorList>
    </citation>
    <scope>NUCLEOTIDE SEQUENCE [LARGE SCALE GENOMIC DNA]</scope>
    <source>
        <strain evidence="12">J</strain>
    </source>
</reference>
<reference evidence="11" key="4">
    <citation type="submission" date="2016-05" db="EMBL/GenBank/DDBJ databases">
        <title>WGS assembly of Xenopus laevis.</title>
        <authorList>
            <person name="Session A."/>
            <person name="Uno Y."/>
            <person name="Kwon T."/>
            <person name="Chapman J."/>
            <person name="Toyoda A."/>
            <person name="Takahashi S."/>
            <person name="Fukui A."/>
            <person name="Hikosaka A."/>
            <person name="Putnam N."/>
            <person name="Stites J."/>
            <person name="Van Heeringen S."/>
            <person name="Quigley I."/>
            <person name="Heinz S."/>
            <person name="Hellsten U."/>
            <person name="Lyons J."/>
            <person name="Suzuki A."/>
            <person name="Kondo M."/>
            <person name="Ogino H."/>
            <person name="Ochi H."/>
            <person name="Bogdanovic O."/>
            <person name="Lister R."/>
            <person name="Georgiou G."/>
            <person name="Paranjpe S."/>
            <person name="Van Kruijsbergen I."/>
            <person name="Mozaffari S."/>
            <person name="Shu S."/>
            <person name="Schmutz J."/>
            <person name="Jenkins J."/>
            <person name="Grimwood J."/>
            <person name="Carlson J."/>
            <person name="Mitros T."/>
            <person name="Simakov O."/>
            <person name="Heald R."/>
            <person name="Miller K."/>
            <person name="Haudenschild C."/>
            <person name="Kuroki Y."/>
            <person name="Tanaka T."/>
            <person name="Michiue T."/>
            <person name="Watanabe M."/>
            <person name="Kinoshita T."/>
            <person name="Ohta Y."/>
            <person name="Mawaribuchi S."/>
            <person name="Suzuki Y."/>
            <person name="Haramoto Y."/>
            <person name="Yamamoto T."/>
            <person name="Takagi C."/>
            <person name="Kitzman J."/>
            <person name="Shendure J."/>
            <person name="Nakayama T."/>
            <person name="Izutsu Y."/>
            <person name="Robert J."/>
            <person name="Dichmann D."/>
            <person name="Flajnik M."/>
            <person name="Houston D."/>
            <person name="Marcotte E."/>
            <person name="Wallingford J."/>
            <person name="Ito Y."/>
            <person name="Asashima M."/>
            <person name="Ueno N."/>
            <person name="Matsuda Y."/>
            <person name="Jan Veenstra G."/>
            <person name="Fujiyama A."/>
            <person name="Harland R."/>
            <person name="Taira M."/>
            <person name="Rokhsar D.S."/>
        </authorList>
    </citation>
    <scope>NUCLEOTIDE SEQUENCE</scope>
    <source>
        <strain evidence="11">J</strain>
        <tissue evidence="11">Blood</tissue>
    </source>
</reference>
<reference key="5">
    <citation type="journal article" date="2018" name="Elife">
        <title>A liquid-like organelle at the root of motile ciliopathy.</title>
        <authorList>
            <person name="Huizar R.L."/>
            <person name="Lee C."/>
            <person name="Boulgakov A.A."/>
            <person name="Horani A."/>
            <person name="Tu F."/>
            <person name="Marcotte E.M."/>
            <person name="Brody S.L."/>
            <person name="Wallingford J.B."/>
        </authorList>
    </citation>
    <scope>SUBCELLULAR LOCATION</scope>
</reference>
<reference key="6">
    <citation type="journal article" date="2020" name="Elife">
        <title>Functional partitioning of a liquid-like organelle during assembly of axonemal dyneins.</title>
        <authorList>
            <person name="Lee C."/>
            <person name="Cox R.M."/>
            <person name="Papoulas O."/>
            <person name="Horani A."/>
            <person name="Drew K."/>
            <person name="Devitt C.C."/>
            <person name="Brody S.L."/>
            <person name="Marcotte E.M."/>
            <person name="Wallingford J.B."/>
        </authorList>
    </citation>
    <scope>SUBCELLULAR LOCATION</scope>
</reference>
<feature type="chain" id="PRO_0000452441" description="Heat shock cognate protein HSP 90-beta">
    <location>
        <begin position="1"/>
        <end position="722"/>
    </location>
</feature>
<feature type="region of interest" description="Disordered" evidence="5">
    <location>
        <begin position="221"/>
        <end position="268"/>
    </location>
</feature>
<feature type="region of interest" description="Disordered" evidence="5">
    <location>
        <begin position="690"/>
        <end position="722"/>
    </location>
</feature>
<feature type="short sequence motif" description="TPR repeat-binding">
    <location>
        <begin position="718"/>
        <end position="722"/>
    </location>
</feature>
<feature type="compositionally biased region" description="Acidic residues" evidence="5">
    <location>
        <begin position="225"/>
        <end position="234"/>
    </location>
</feature>
<feature type="compositionally biased region" description="Basic and acidic residues" evidence="5">
    <location>
        <begin position="235"/>
        <end position="251"/>
    </location>
</feature>
<feature type="binding site" evidence="1">
    <location>
        <position position="46"/>
    </location>
    <ligand>
        <name>ATP</name>
        <dbReference type="ChEBI" id="CHEBI:30616"/>
    </ligand>
</feature>
<feature type="binding site" evidence="1">
    <location>
        <position position="88"/>
    </location>
    <ligand>
        <name>ATP</name>
        <dbReference type="ChEBI" id="CHEBI:30616"/>
    </ligand>
</feature>
<feature type="binding site" evidence="1">
    <location>
        <position position="107"/>
    </location>
    <ligand>
        <name>ATP</name>
        <dbReference type="ChEBI" id="CHEBI:30616"/>
    </ligand>
</feature>
<feature type="binding site" evidence="1">
    <location>
        <position position="133"/>
    </location>
    <ligand>
        <name>ATP</name>
        <dbReference type="ChEBI" id="CHEBI:30616"/>
    </ligand>
</feature>
<feature type="binding site" evidence="1">
    <location>
        <position position="390"/>
    </location>
    <ligand>
        <name>ATP</name>
        <dbReference type="ChEBI" id="CHEBI:30616"/>
    </ligand>
</feature>
<feature type="modified residue" description="Phosphoserine" evidence="3">
    <location>
        <position position="226"/>
    </location>
</feature>
<feature type="modified residue" description="Phosphoserine" evidence="3">
    <location>
        <position position="254"/>
    </location>
</feature>
<name>HS90B_XENLA</name>
<evidence type="ECO:0000250" key="1"/>
<evidence type="ECO:0000250" key="2">
    <source>
        <dbReference type="UniProtKB" id="P07900"/>
    </source>
</evidence>
<evidence type="ECO:0000250" key="3">
    <source>
        <dbReference type="UniProtKB" id="P08238"/>
    </source>
</evidence>
<evidence type="ECO:0000250" key="4">
    <source>
        <dbReference type="UniProtKB" id="Q04619"/>
    </source>
</evidence>
<evidence type="ECO:0000256" key="5">
    <source>
        <dbReference type="SAM" id="MobiDB-lite"/>
    </source>
</evidence>
<evidence type="ECO:0000269" key="6">
    <source>
    </source>
</evidence>
<evidence type="ECO:0000269" key="7">
    <source>
    </source>
</evidence>
<evidence type="ECO:0000305" key="8"/>
<evidence type="ECO:0000312" key="9">
    <source>
        <dbReference type="EMBL" id="AAH77195.1"/>
    </source>
</evidence>
<evidence type="ECO:0000312" key="10">
    <source>
        <dbReference type="EMBL" id="AAV41061.1"/>
    </source>
</evidence>
<evidence type="ECO:0000312" key="11">
    <source>
        <dbReference type="EMBL" id="OCT77446.1"/>
    </source>
</evidence>
<evidence type="ECO:0000312" key="12">
    <source>
        <dbReference type="Proteomes" id="UP000186698"/>
    </source>
</evidence>
<evidence type="ECO:0000312" key="13">
    <source>
        <dbReference type="Xenbase" id="XB-GENE-866421"/>
    </source>
</evidence>
<gene>
    <name evidence="13" type="primary">hsp90ab1</name>
    <name evidence="9" type="synonym">hsp90beta</name>
    <name evidence="3" type="synonym">hspc3</name>
    <name evidence="11" type="ORF">XELAEV_18028538mg</name>
</gene>
<sequence>MPEVAHNGEEEVETFAFQAEIAQLMSLIINTFYSNKEIFLRELISNASDALDKIRYESLTDPSKLDSGKDLKIDIIPNRLERTLTMIDTGIGMTKADLINNLGTIAKSGTKAFMEALQAGADISMIGQFGVGFYSAYLVAEKVVVITKHNDDEQYAWESSAGGSFTVKVDTGEPIGRGTKVILHLKEDQTEYLEEKRVKETVKKHSQFIGYPITLYLEKEREKEISDDEAEEEKEEKKEEEGENDKPKIEDVGSDEEEEGKDKKKKTKKIKEKYIDQEELNKTKPIWTRNPDDITQEEYGEFYKSLTNDWEDHLAVKHFSVEGQLEFRALLFIPRRAPFDLFENKKKKNNIKLYVRRVFIMDSCDELIPEYLNFVRGVVDSEDLPLNISREMLQQSKILKVIRKNIVKKCLELFCELAEDKENYKKFYEGFSKNLKLGIHEDSTNRKKLSELLRYHTSQTGDEMASLTEYVSRMKENQKSIYYITGESKDQVANSAFVERVRKRGFEVVYMTEPIDEYCVQQLKEFDGKTLVSVTKEGLELPEDEEEKKTMEENKTKFESLCKLMKEILDKKVEKVTVSNRLVSSPCCIVTSTYGWTANMERIMKAQALRDNSTMGYMMAKKHLEINPEHPIVETLRQKADTDKNDKAVKDLVVLLFETALLSSGFSLDDPQTHSNRIYRMIKLGLGIDDDDAPIEEASPSVPDDIPPLEGEEDASRMEEVD</sequence>
<accession>Q6AZV1</accession>
<comment type="function">
    <text evidence="3">Molecular chaperone that promotes the maturation, structural maintenance and proper regulation of specific target proteins involved for instance in cell cycle control and signal transduction. Undergoes a functional cycle linked to its ATPase activity. This cycle probably induces conformational changes in the client proteins, thereby causing their activation. Interacts dynamically with various co-chaperones that modulate its substrate recognition, ATPase cycle and chaperone function. Engages with a range of client protein classes via its interaction with various co-chaperone proteins or complexes, that act as adapters, simultaneously able to interact with the specific client and the central chaperone itself. Recruitment of ATP and co-chaperone followed by client protein forms a functional chaperone. After the completion of the chaperoning process, properly folded client protein and co-chaperone leave HSP90 in an ADP-bound partially open conformation and finally, ADP is released from HSP90 which acquires an open conformation for the next cycle.</text>
</comment>
<comment type="activity regulation">
    <text evidence="3">In the resting state, through the dimerization of its C-terminal domain, HSP90 forms a homodimer which is defined as the open conformation. Upon ATP-binding, the N-terminal domain undergoes significant conformational changes and comes in contact to form an active closed conformation. After HSP90 finishes its chaperoning tasks of assisting the proper folding, stabilization and activation of client proteins under the active state, ATP molecule is hydrolyzed to ADP which then dissociates from HSP90 and directs the protein back to the resting state.</text>
</comment>
<comment type="subunit">
    <text evidence="3">Monomer. Homodimer (By similarity).</text>
</comment>
<comment type="subcellular location">
    <subcellularLocation>
        <location evidence="3">Cytoplasm</location>
    </subcellularLocation>
    <subcellularLocation>
        <location evidence="6 7">Dynein axonemal particle</location>
    </subcellularLocation>
</comment>
<comment type="domain">
    <text evidence="2">The TPR repeat-binding motif mediates interaction with TPR repeat-containing proteins.</text>
</comment>
<comment type="miscellaneous">
    <text evidence="4">In contrast to other HSP90 heat shock proteins, this one is not induced by heat shock or mitogenic stimuli but is strictly constitutive.</text>
</comment>
<comment type="similarity">
    <text evidence="8">Belongs to the heat shock protein 90 family.</text>
</comment>
<dbReference type="EMBL" id="BC077195">
    <property type="protein sequence ID" value="AAH77195.1"/>
    <property type="molecule type" value="mRNA"/>
</dbReference>
<dbReference type="EMBL" id="AY785160">
    <property type="protein sequence ID" value="AAV41061.1"/>
    <property type="molecule type" value="mRNA"/>
</dbReference>
<dbReference type="EMBL" id="CM004475">
    <property type="protein sequence ID" value="OCT77446.1"/>
    <property type="molecule type" value="Genomic_DNA"/>
</dbReference>
<dbReference type="RefSeq" id="NP_001086624.1">
    <property type="nucleotide sequence ID" value="NM_001093155.1"/>
</dbReference>
<dbReference type="SMR" id="Q6AZV1"/>
<dbReference type="STRING" id="8355.Q6AZV1"/>
<dbReference type="PaxDb" id="8355-Q6AZV1"/>
<dbReference type="DNASU" id="446459"/>
<dbReference type="GeneID" id="446459"/>
<dbReference type="KEGG" id="xla:446459"/>
<dbReference type="AGR" id="Xenbase:XB-GENE-866421"/>
<dbReference type="CTD" id="446459"/>
<dbReference type="Xenbase" id="XB-GENE-866421">
    <property type="gene designation" value="hsp90ab1.S"/>
</dbReference>
<dbReference type="OMA" id="TRMKAEQ"/>
<dbReference type="OrthoDB" id="5426351at2759"/>
<dbReference type="CD-CODE" id="78E86D56">
    <property type="entry name" value="Mitochondrial cloud"/>
</dbReference>
<dbReference type="Proteomes" id="UP000186698">
    <property type="component" value="Chromosome 5S"/>
</dbReference>
<dbReference type="Proteomes" id="UP000694892">
    <property type="component" value="Chromosome 5S"/>
</dbReference>
<dbReference type="Bgee" id="446459">
    <property type="expression patterns" value="Expressed in neurula embryo and 19 other cell types or tissues"/>
</dbReference>
<dbReference type="GO" id="GO:0005829">
    <property type="term" value="C:cytosol"/>
    <property type="evidence" value="ECO:0000318"/>
    <property type="project" value="GO_Central"/>
</dbReference>
<dbReference type="GO" id="GO:0120293">
    <property type="term" value="C:dynein axonemal particle"/>
    <property type="evidence" value="ECO:0000314"/>
    <property type="project" value="UniProtKB"/>
</dbReference>
<dbReference type="GO" id="GO:0048471">
    <property type="term" value="C:perinuclear region of cytoplasm"/>
    <property type="evidence" value="ECO:0000318"/>
    <property type="project" value="GO_Central"/>
</dbReference>
<dbReference type="GO" id="GO:0005886">
    <property type="term" value="C:plasma membrane"/>
    <property type="evidence" value="ECO:0000318"/>
    <property type="project" value="GO_Central"/>
</dbReference>
<dbReference type="GO" id="GO:0032991">
    <property type="term" value="C:protein-containing complex"/>
    <property type="evidence" value="ECO:0000318"/>
    <property type="project" value="GO_Central"/>
</dbReference>
<dbReference type="GO" id="GO:0005524">
    <property type="term" value="F:ATP binding"/>
    <property type="evidence" value="ECO:0000318"/>
    <property type="project" value="GO_Central"/>
</dbReference>
<dbReference type="GO" id="GO:0016887">
    <property type="term" value="F:ATP hydrolysis activity"/>
    <property type="evidence" value="ECO:0000318"/>
    <property type="project" value="GO_Central"/>
</dbReference>
<dbReference type="GO" id="GO:0140662">
    <property type="term" value="F:ATP-dependent protein folding chaperone"/>
    <property type="evidence" value="ECO:0007669"/>
    <property type="project" value="InterPro"/>
</dbReference>
<dbReference type="GO" id="GO:0051082">
    <property type="term" value="F:unfolded protein binding"/>
    <property type="evidence" value="ECO:0000318"/>
    <property type="project" value="GO_Central"/>
</dbReference>
<dbReference type="GO" id="GO:0034605">
    <property type="term" value="P:cellular response to heat"/>
    <property type="evidence" value="ECO:0000318"/>
    <property type="project" value="GO_Central"/>
</dbReference>
<dbReference type="GO" id="GO:0006457">
    <property type="term" value="P:protein folding"/>
    <property type="evidence" value="ECO:0000318"/>
    <property type="project" value="GO_Central"/>
</dbReference>
<dbReference type="GO" id="GO:0050821">
    <property type="term" value="P:protein stabilization"/>
    <property type="evidence" value="ECO:0000318"/>
    <property type="project" value="GO_Central"/>
</dbReference>
<dbReference type="CDD" id="cd16927">
    <property type="entry name" value="HATPase_Hsp90-like"/>
    <property type="match status" value="1"/>
</dbReference>
<dbReference type="FunFam" id="1.20.120.790:FF:000001">
    <property type="entry name" value="Heat shock protein 90 alpha"/>
    <property type="match status" value="1"/>
</dbReference>
<dbReference type="FunFam" id="3.30.230.80:FF:000001">
    <property type="entry name" value="Heat shock protein 90 alpha"/>
    <property type="match status" value="1"/>
</dbReference>
<dbReference type="FunFam" id="3.40.50.11260:FF:000001">
    <property type="entry name" value="Heat shock protein 90 alpha"/>
    <property type="match status" value="1"/>
</dbReference>
<dbReference type="FunFam" id="3.30.565.10:FF:000204">
    <property type="entry name" value="Heat shock protein HSP 90-beta"/>
    <property type="match status" value="1"/>
</dbReference>
<dbReference type="Gene3D" id="3.30.230.80">
    <property type="match status" value="1"/>
</dbReference>
<dbReference type="Gene3D" id="3.40.50.11260">
    <property type="match status" value="1"/>
</dbReference>
<dbReference type="Gene3D" id="1.20.120.790">
    <property type="entry name" value="Heat shock protein 90, C-terminal domain"/>
    <property type="match status" value="1"/>
</dbReference>
<dbReference type="Gene3D" id="3.30.565.10">
    <property type="entry name" value="Histidine kinase-like ATPase, C-terminal domain"/>
    <property type="match status" value="1"/>
</dbReference>
<dbReference type="HAMAP" id="MF_00505">
    <property type="entry name" value="HSP90"/>
    <property type="match status" value="1"/>
</dbReference>
<dbReference type="InterPro" id="IPR036890">
    <property type="entry name" value="HATPase_C_sf"/>
</dbReference>
<dbReference type="InterPro" id="IPR019805">
    <property type="entry name" value="Heat_shock_protein_90_CS"/>
</dbReference>
<dbReference type="InterPro" id="IPR037196">
    <property type="entry name" value="HSP90_C"/>
</dbReference>
<dbReference type="InterPro" id="IPR001404">
    <property type="entry name" value="Hsp90_fam"/>
</dbReference>
<dbReference type="InterPro" id="IPR020575">
    <property type="entry name" value="Hsp90_N"/>
</dbReference>
<dbReference type="InterPro" id="IPR020568">
    <property type="entry name" value="Ribosomal_Su5_D2-typ_SF"/>
</dbReference>
<dbReference type="NCBIfam" id="NF003555">
    <property type="entry name" value="PRK05218.1"/>
    <property type="match status" value="1"/>
</dbReference>
<dbReference type="PANTHER" id="PTHR11528">
    <property type="entry name" value="HEAT SHOCK PROTEIN 90 FAMILY MEMBER"/>
    <property type="match status" value="1"/>
</dbReference>
<dbReference type="Pfam" id="PF13589">
    <property type="entry name" value="HATPase_c_3"/>
    <property type="match status" value="1"/>
</dbReference>
<dbReference type="Pfam" id="PF00183">
    <property type="entry name" value="HSP90"/>
    <property type="match status" value="1"/>
</dbReference>
<dbReference type="PIRSF" id="PIRSF002583">
    <property type="entry name" value="Hsp90"/>
    <property type="match status" value="1"/>
</dbReference>
<dbReference type="PRINTS" id="PR00775">
    <property type="entry name" value="HEATSHOCK90"/>
</dbReference>
<dbReference type="SMART" id="SM00387">
    <property type="entry name" value="HATPase_c"/>
    <property type="match status" value="1"/>
</dbReference>
<dbReference type="SUPFAM" id="SSF55874">
    <property type="entry name" value="ATPase domain of HSP90 chaperone/DNA topoisomerase II/histidine kinase"/>
    <property type="match status" value="1"/>
</dbReference>
<dbReference type="SUPFAM" id="SSF110942">
    <property type="entry name" value="HSP90 C-terminal domain"/>
    <property type="match status" value="1"/>
</dbReference>
<dbReference type="SUPFAM" id="SSF54211">
    <property type="entry name" value="Ribosomal protein S5 domain 2-like"/>
    <property type="match status" value="1"/>
</dbReference>
<dbReference type="PROSITE" id="PS00298">
    <property type="entry name" value="HSP90"/>
    <property type="match status" value="1"/>
</dbReference>
<protein>
    <recommendedName>
        <fullName evidence="8">Heat shock cognate protein HSP 90-beta</fullName>
    </recommendedName>
</protein>
<organism evidence="9">
    <name type="scientific">Xenopus laevis</name>
    <name type="common">African clawed frog</name>
    <dbReference type="NCBI Taxonomy" id="8355"/>
    <lineage>
        <taxon>Eukaryota</taxon>
        <taxon>Metazoa</taxon>
        <taxon>Chordata</taxon>
        <taxon>Craniata</taxon>
        <taxon>Vertebrata</taxon>
        <taxon>Euteleostomi</taxon>
        <taxon>Amphibia</taxon>
        <taxon>Batrachia</taxon>
        <taxon>Anura</taxon>
        <taxon>Pipoidea</taxon>
        <taxon>Pipidae</taxon>
        <taxon>Xenopodinae</taxon>
        <taxon>Xenopus</taxon>
        <taxon>Xenopus</taxon>
    </lineage>
</organism>
<proteinExistence type="evidence at transcript level"/>
<keyword id="KW-0067">ATP-binding</keyword>
<keyword id="KW-0143">Chaperone</keyword>
<keyword id="KW-0963">Cytoplasm</keyword>
<keyword id="KW-0547">Nucleotide-binding</keyword>
<keyword id="KW-0597">Phosphoprotein</keyword>
<keyword id="KW-1185">Reference proteome</keyword>
<keyword id="KW-0346">Stress response</keyword>